<evidence type="ECO:0000255" key="1">
    <source>
        <dbReference type="HAMAP-Rule" id="MF_00272"/>
    </source>
</evidence>
<evidence type="ECO:0000255" key="2">
    <source>
        <dbReference type="PROSITE-ProRule" id="PRU01066"/>
    </source>
</evidence>
<reference key="1">
    <citation type="submission" date="2007-02" db="EMBL/GenBank/DDBJ databases">
        <title>Complete sequence of chromosome of Shewanella baltica OS155.</title>
        <authorList>
            <consortium name="US DOE Joint Genome Institute"/>
            <person name="Copeland A."/>
            <person name="Lucas S."/>
            <person name="Lapidus A."/>
            <person name="Barry K."/>
            <person name="Detter J.C."/>
            <person name="Glavina del Rio T."/>
            <person name="Hammon N."/>
            <person name="Israni S."/>
            <person name="Dalin E."/>
            <person name="Tice H."/>
            <person name="Pitluck S."/>
            <person name="Sims D.R."/>
            <person name="Brettin T."/>
            <person name="Bruce D."/>
            <person name="Han C."/>
            <person name="Tapia R."/>
            <person name="Brainard J."/>
            <person name="Schmutz J."/>
            <person name="Larimer F."/>
            <person name="Land M."/>
            <person name="Hauser L."/>
            <person name="Kyrpides N."/>
            <person name="Mikhailova N."/>
            <person name="Brettar I."/>
            <person name="Klappenbach J."/>
            <person name="Konstantinidis K."/>
            <person name="Rodrigues J."/>
            <person name="Tiedje J."/>
            <person name="Richardson P."/>
        </authorList>
    </citation>
    <scope>NUCLEOTIDE SEQUENCE [LARGE SCALE GENOMIC DNA]</scope>
    <source>
        <strain>OS155 / ATCC BAA-1091</strain>
    </source>
</reference>
<sequence length="129" mass="13978">MSNIPTELKYASSHEWIRKEEDGSYTVGITEHAQELLGDMVFVELPEVGDTVTAGEDCAVAESVKAASDIYAPISGEVIAVNEALEDSPELVNSSAYGEGWFFRVMPSDESEVDALLDAEGYQAVIDEE</sequence>
<name>GCSH_SHEB5</name>
<keyword id="KW-0450">Lipoyl</keyword>
<keyword id="KW-1185">Reference proteome</keyword>
<comment type="function">
    <text evidence="1">The glycine cleavage system catalyzes the degradation of glycine. The H protein shuttles the methylamine group of glycine from the P protein to the T protein.</text>
</comment>
<comment type="cofactor">
    <cofactor evidence="1">
        <name>(R)-lipoate</name>
        <dbReference type="ChEBI" id="CHEBI:83088"/>
    </cofactor>
    <text evidence="1">Binds 1 lipoyl cofactor covalently.</text>
</comment>
<comment type="subunit">
    <text evidence="1">The glycine cleavage system is composed of four proteins: P, T, L and H.</text>
</comment>
<comment type="similarity">
    <text evidence="1">Belongs to the GcvH family.</text>
</comment>
<feature type="chain" id="PRO_1000022200" description="Glycine cleavage system H protein">
    <location>
        <begin position="1"/>
        <end position="129"/>
    </location>
</feature>
<feature type="domain" description="Lipoyl-binding" evidence="2">
    <location>
        <begin position="24"/>
        <end position="106"/>
    </location>
</feature>
<feature type="modified residue" description="N6-lipoyllysine" evidence="1">
    <location>
        <position position="65"/>
    </location>
</feature>
<proteinExistence type="inferred from homology"/>
<gene>
    <name evidence="1" type="primary">gcvH</name>
    <name type="ordered locus">Sbal_0618</name>
</gene>
<organism>
    <name type="scientific">Shewanella baltica (strain OS155 / ATCC BAA-1091)</name>
    <dbReference type="NCBI Taxonomy" id="325240"/>
    <lineage>
        <taxon>Bacteria</taxon>
        <taxon>Pseudomonadati</taxon>
        <taxon>Pseudomonadota</taxon>
        <taxon>Gammaproteobacteria</taxon>
        <taxon>Alteromonadales</taxon>
        <taxon>Shewanellaceae</taxon>
        <taxon>Shewanella</taxon>
    </lineage>
</organism>
<dbReference type="EMBL" id="CP000563">
    <property type="protein sequence ID" value="ABN60147.1"/>
    <property type="molecule type" value="Genomic_DNA"/>
</dbReference>
<dbReference type="RefSeq" id="WP_011845766.1">
    <property type="nucleotide sequence ID" value="NC_009052.1"/>
</dbReference>
<dbReference type="SMR" id="A3D084"/>
<dbReference type="STRING" id="325240.Sbal_0618"/>
<dbReference type="KEGG" id="sbl:Sbal_0618"/>
<dbReference type="HOGENOM" id="CLU_097408_2_1_6"/>
<dbReference type="OrthoDB" id="9796712at2"/>
<dbReference type="Proteomes" id="UP000001557">
    <property type="component" value="Chromosome"/>
</dbReference>
<dbReference type="GO" id="GO:0005829">
    <property type="term" value="C:cytosol"/>
    <property type="evidence" value="ECO:0007669"/>
    <property type="project" value="TreeGrafter"/>
</dbReference>
<dbReference type="GO" id="GO:0005960">
    <property type="term" value="C:glycine cleavage complex"/>
    <property type="evidence" value="ECO:0007669"/>
    <property type="project" value="InterPro"/>
</dbReference>
<dbReference type="GO" id="GO:0019464">
    <property type="term" value="P:glycine decarboxylation via glycine cleavage system"/>
    <property type="evidence" value="ECO:0007669"/>
    <property type="project" value="UniProtKB-UniRule"/>
</dbReference>
<dbReference type="CDD" id="cd06848">
    <property type="entry name" value="GCS_H"/>
    <property type="match status" value="1"/>
</dbReference>
<dbReference type="FunFam" id="2.40.50.100:FF:000011">
    <property type="entry name" value="Glycine cleavage system H protein"/>
    <property type="match status" value="1"/>
</dbReference>
<dbReference type="Gene3D" id="2.40.50.100">
    <property type="match status" value="1"/>
</dbReference>
<dbReference type="HAMAP" id="MF_00272">
    <property type="entry name" value="GcvH"/>
    <property type="match status" value="1"/>
</dbReference>
<dbReference type="InterPro" id="IPR003016">
    <property type="entry name" value="2-oxoA_DH_lipoyl-BS"/>
</dbReference>
<dbReference type="InterPro" id="IPR000089">
    <property type="entry name" value="Biotin_lipoyl"/>
</dbReference>
<dbReference type="InterPro" id="IPR002930">
    <property type="entry name" value="GCV_H"/>
</dbReference>
<dbReference type="InterPro" id="IPR033753">
    <property type="entry name" value="GCV_H/Fam206"/>
</dbReference>
<dbReference type="InterPro" id="IPR017453">
    <property type="entry name" value="GCV_H_sub"/>
</dbReference>
<dbReference type="InterPro" id="IPR011053">
    <property type="entry name" value="Single_hybrid_motif"/>
</dbReference>
<dbReference type="NCBIfam" id="TIGR00527">
    <property type="entry name" value="gcvH"/>
    <property type="match status" value="1"/>
</dbReference>
<dbReference type="NCBIfam" id="NF002270">
    <property type="entry name" value="PRK01202.1"/>
    <property type="match status" value="1"/>
</dbReference>
<dbReference type="PANTHER" id="PTHR11715">
    <property type="entry name" value="GLYCINE CLEAVAGE SYSTEM H PROTEIN"/>
    <property type="match status" value="1"/>
</dbReference>
<dbReference type="PANTHER" id="PTHR11715:SF3">
    <property type="entry name" value="GLYCINE CLEAVAGE SYSTEM H PROTEIN-RELATED"/>
    <property type="match status" value="1"/>
</dbReference>
<dbReference type="Pfam" id="PF01597">
    <property type="entry name" value="GCV_H"/>
    <property type="match status" value="1"/>
</dbReference>
<dbReference type="SUPFAM" id="SSF51230">
    <property type="entry name" value="Single hybrid motif"/>
    <property type="match status" value="1"/>
</dbReference>
<dbReference type="PROSITE" id="PS50968">
    <property type="entry name" value="BIOTINYL_LIPOYL"/>
    <property type="match status" value="1"/>
</dbReference>
<dbReference type="PROSITE" id="PS00189">
    <property type="entry name" value="LIPOYL"/>
    <property type="match status" value="1"/>
</dbReference>
<protein>
    <recommendedName>
        <fullName evidence="1">Glycine cleavage system H protein</fullName>
    </recommendedName>
</protein>
<accession>A3D084</accession>